<dbReference type="EMBL" id="AF287273">
    <property type="protein sequence ID" value="AAL02426.1"/>
    <property type="molecule type" value="mRNA"/>
</dbReference>
<dbReference type="EMBL" id="AE014134">
    <property type="protein sequence ID" value="AAN10380.2"/>
    <property type="molecule type" value="Genomic_DNA"/>
</dbReference>
<dbReference type="RefSeq" id="NP_787969.1">
    <property type="nucleotide sequence ID" value="NM_175955.3"/>
</dbReference>
<dbReference type="SMR" id="Q8IQ05"/>
<dbReference type="FunCoup" id="Q8IQ05">
    <property type="interactions" value="1658"/>
</dbReference>
<dbReference type="IntAct" id="Q8IQ05">
    <property type="interactions" value="2"/>
</dbReference>
<dbReference type="STRING" id="7227.FBpp0077230"/>
<dbReference type="GlyGen" id="Q8IQ05">
    <property type="glycosylation" value="1 site"/>
</dbReference>
<dbReference type="PaxDb" id="7227-FBpp0077230"/>
<dbReference type="EnsemblMetazoa" id="FBtr0077541">
    <property type="protein sequence ID" value="FBpp0077230"/>
    <property type="gene ID" value="FBgn0015376"/>
</dbReference>
<dbReference type="GeneID" id="44637"/>
<dbReference type="KEGG" id="dme:Dmel_CG33122"/>
<dbReference type="UCSC" id="CG33122-RA">
    <property type="organism name" value="d. melanogaster"/>
</dbReference>
<dbReference type="AGR" id="FB:FBgn0015376"/>
<dbReference type="CTD" id="44637"/>
<dbReference type="FlyBase" id="FBgn0015376">
    <property type="gene designation" value="cutlet"/>
</dbReference>
<dbReference type="VEuPathDB" id="VectorBase:FBgn0015376"/>
<dbReference type="eggNOG" id="KOG1969">
    <property type="taxonomic scope" value="Eukaryota"/>
</dbReference>
<dbReference type="GeneTree" id="ENSGT00550000075029"/>
<dbReference type="HOGENOM" id="CLU_004894_4_1_1"/>
<dbReference type="InParanoid" id="Q8IQ05"/>
<dbReference type="OMA" id="RWLKGWE"/>
<dbReference type="OrthoDB" id="2195431at2759"/>
<dbReference type="PhylomeDB" id="Q8IQ05"/>
<dbReference type="Reactome" id="R-DME-174411">
    <property type="pathway name" value="Polymerase switching on the C-strand of the telomere"/>
</dbReference>
<dbReference type="BioGRID-ORCS" id="44637">
    <property type="hits" value="0 hits in 1 CRISPR screen"/>
</dbReference>
<dbReference type="GenomeRNAi" id="44637"/>
<dbReference type="PRO" id="PR:Q8IQ05"/>
<dbReference type="Proteomes" id="UP000000803">
    <property type="component" value="Chromosome 2L"/>
</dbReference>
<dbReference type="Bgee" id="FBgn0015376">
    <property type="expression patterns" value="Expressed in T neuron T5b (Drosophila) in embryonic/larval optic lobe (Drosophila) and 42 other cell types or tissues"/>
</dbReference>
<dbReference type="ExpressionAtlas" id="Q8IQ05">
    <property type="expression patterns" value="baseline and differential"/>
</dbReference>
<dbReference type="GO" id="GO:0031390">
    <property type="term" value="C:Ctf18 RFC-like complex"/>
    <property type="evidence" value="ECO:0000250"/>
    <property type="project" value="FlyBase"/>
</dbReference>
<dbReference type="GO" id="GO:0005634">
    <property type="term" value="C:nucleus"/>
    <property type="evidence" value="ECO:0000314"/>
    <property type="project" value="FlyBase"/>
</dbReference>
<dbReference type="GO" id="GO:0005524">
    <property type="term" value="F:ATP binding"/>
    <property type="evidence" value="ECO:0007669"/>
    <property type="project" value="UniProtKB-KW"/>
</dbReference>
<dbReference type="GO" id="GO:0016887">
    <property type="term" value="F:ATP hydrolysis activity"/>
    <property type="evidence" value="ECO:0007669"/>
    <property type="project" value="InterPro"/>
</dbReference>
<dbReference type="GO" id="GO:0003677">
    <property type="term" value="F:DNA binding"/>
    <property type="evidence" value="ECO:0000318"/>
    <property type="project" value="GO_Central"/>
</dbReference>
<dbReference type="GO" id="GO:0006260">
    <property type="term" value="P:DNA replication"/>
    <property type="evidence" value="ECO:0007669"/>
    <property type="project" value="UniProtKB-KW"/>
</dbReference>
<dbReference type="CDD" id="cd00009">
    <property type="entry name" value="AAA"/>
    <property type="match status" value="1"/>
</dbReference>
<dbReference type="CDD" id="cd18140">
    <property type="entry name" value="HLD_clamp_RFC"/>
    <property type="match status" value="1"/>
</dbReference>
<dbReference type="FunFam" id="1.10.8.60:FF:000074">
    <property type="entry name" value="Chromosome transmission fidelity protein 18"/>
    <property type="match status" value="1"/>
</dbReference>
<dbReference type="Gene3D" id="1.10.8.60">
    <property type="match status" value="1"/>
</dbReference>
<dbReference type="Gene3D" id="3.40.50.300">
    <property type="entry name" value="P-loop containing nucleotide triphosphate hydrolases"/>
    <property type="match status" value="1"/>
</dbReference>
<dbReference type="InterPro" id="IPR003593">
    <property type="entry name" value="AAA+_ATPase"/>
</dbReference>
<dbReference type="InterPro" id="IPR003959">
    <property type="entry name" value="ATPase_AAA_core"/>
</dbReference>
<dbReference type="InterPro" id="IPR053016">
    <property type="entry name" value="CTF18-RFC_complex"/>
</dbReference>
<dbReference type="InterPro" id="IPR027417">
    <property type="entry name" value="P-loop_NTPase"/>
</dbReference>
<dbReference type="InterPro" id="IPR047854">
    <property type="entry name" value="RFC_lid"/>
</dbReference>
<dbReference type="PANTHER" id="PTHR46765">
    <property type="entry name" value="P-LOOP CONTAINING NUCLEOSIDE TRIPHOSPHATE HYDROLASES SUPERFAMILY PROTEIN"/>
    <property type="match status" value="1"/>
</dbReference>
<dbReference type="PANTHER" id="PTHR46765:SF1">
    <property type="entry name" value="P-LOOP CONTAINING NUCLEOSIDE TRIPHOSPHATE HYDROLASES SUPERFAMILY PROTEIN"/>
    <property type="match status" value="1"/>
</dbReference>
<dbReference type="Pfam" id="PF00004">
    <property type="entry name" value="AAA"/>
    <property type="match status" value="1"/>
</dbReference>
<dbReference type="SMART" id="SM00382">
    <property type="entry name" value="AAA"/>
    <property type="match status" value="1"/>
</dbReference>
<dbReference type="SUPFAM" id="SSF52540">
    <property type="entry name" value="P-loop containing nucleoside triphosphate hydrolases"/>
    <property type="match status" value="1"/>
</dbReference>
<keyword id="KW-0067">ATP-binding</keyword>
<keyword id="KW-0131">Cell cycle</keyword>
<keyword id="KW-0235">DNA replication</keyword>
<keyword id="KW-0238">DNA-binding</keyword>
<keyword id="KW-0547">Nucleotide-binding</keyword>
<keyword id="KW-0539">Nucleus</keyword>
<keyword id="KW-1185">Reference proteome</keyword>
<proteinExistence type="evidence at transcript level"/>
<comment type="function">
    <text evidence="1">Chromosome cohesion factor involved in sister chromatid cohesion and fidelity of chromosome transmission. Component of one of the cell nuclear antigen loader complexes, CTF18-replication factor C (CTF18-RFC). The CTF18-RFC complex catalyzes the ATP-dependent loading of PCNA onto primed and gapped DNA and has weak ATPase activity. The CTF18-RFC complex catalyzes the ATP-dependent loading of PCNA onto primed and gapped DNA.</text>
</comment>
<comment type="subunit">
    <text evidence="1">Component of the CTF18-RFC complex.</text>
</comment>
<comment type="subcellular location">
    <subcellularLocation>
        <location evidence="4">Nucleus</location>
    </subcellularLocation>
</comment>
<comment type="disruption phenotype">
    <text evidence="4">Viable (PubMed:11161570). In ovaries, results in defective oogenesis leading to sterility (PubMed:11161570). Results in morphological defects in both eye and wing (PubMed:11161570). Simultaneous knockout of cutlet and RfC4 or RfC38 exacerbates the eye defect of the single cutlet knockout (PubMed:11161570).</text>
</comment>
<comment type="similarity">
    <text evidence="6">Belongs to the activator 1 small subunits family. CTF18 subfamily.</text>
</comment>
<organism evidence="9">
    <name type="scientific">Drosophila melanogaster</name>
    <name type="common">Fruit fly</name>
    <dbReference type="NCBI Taxonomy" id="7227"/>
    <lineage>
        <taxon>Eukaryota</taxon>
        <taxon>Metazoa</taxon>
        <taxon>Ecdysozoa</taxon>
        <taxon>Arthropoda</taxon>
        <taxon>Hexapoda</taxon>
        <taxon>Insecta</taxon>
        <taxon>Pterygota</taxon>
        <taxon>Neoptera</taxon>
        <taxon>Endopterygota</taxon>
        <taxon>Diptera</taxon>
        <taxon>Brachycera</taxon>
        <taxon>Muscomorpha</taxon>
        <taxon>Ephydroidea</taxon>
        <taxon>Drosophilidae</taxon>
        <taxon>Drosophila</taxon>
        <taxon>Sophophora</taxon>
    </lineage>
</organism>
<name>CTF18_DROME</name>
<evidence type="ECO:0000250" key="1">
    <source>
        <dbReference type="UniProtKB" id="Q8WVB6"/>
    </source>
</evidence>
<evidence type="ECO:0000255" key="2">
    <source>
        <dbReference type="PROSITE-ProRule" id="PRU00499"/>
    </source>
</evidence>
<evidence type="ECO:0000256" key="3">
    <source>
        <dbReference type="SAM" id="MobiDB-lite"/>
    </source>
</evidence>
<evidence type="ECO:0000269" key="4">
    <source>
    </source>
</evidence>
<evidence type="ECO:0000303" key="5">
    <source>
    </source>
</evidence>
<evidence type="ECO:0000305" key="6"/>
<evidence type="ECO:0000312" key="7">
    <source>
        <dbReference type="EMBL" id="AAL02426.1"/>
    </source>
</evidence>
<evidence type="ECO:0000312" key="8">
    <source>
        <dbReference type="FlyBase" id="FBgn0015376"/>
    </source>
</evidence>
<evidence type="ECO:0000312" key="9">
    <source>
        <dbReference type="Proteomes" id="UP000000803"/>
    </source>
</evidence>
<sequence length="993" mass="111749">MDQYPDENEEFELQYQDELELLEDLPDEFNAYDGPSTSKQAAEKQKENRAPVAALRDSTRLGNSTLGSPQLSQITFGASQLGGEEEAEGTSSGGQVNRRLFGTPKGPPVGRGCSTPFQRMPAIQELENTQLTSRSYGLEKENAAANQLQEVGLKNVNKRRLERDLFGDIDDLFHESYEDPMVKKARTEEQRDHEAIERILELRRKMRESSKTLRKDDVSRLKALHDFKMRNLSYEIPNWPFLAIQRSDLERIYVRFHSEDYEQRQLDLISARGEVVGSLLGEAKDKIWQEAGEIVLSRATAAEDADVTLVNSNANSEPGRLWVDKYKPRKYIDLLSDEMTNRSLLYWLKMWDKVVFGKAFHSKREQEAVTGEGGTAGGAANQLNSFNKRTGKFESNGGWRQRKSRQALNTNVDALGRPMQKVALLCGPPGLGKTTLAHTIARHAGYNVREINASDDRSPEAFKLALENGTQMSSVLNEDKRPNCIVLDEIDGAPRQSIDYLVKFISDAVYTKVKAKGAKAEHNVLKRPIICICNDVYDPALRPLRQVAFVVTFPPIDAARLAERLVKIAFKEQLKTDFGSLIALAEKSGNDVRSCISSMQFFNAQKHSLTLQDVLNNNLGQKDRHQGLFAVWDAIFRIQRPRKTLHTDANKVDEPAQVTMTNTSVTTRVRNVLEVVHSSGDYERLTQGVYENYLQQKMPDPNFTGVCEALKWFCFTDTVQHQISRQQNYSVYPYLQYGFVAWHLLFATLAWPKIAFPTRGFEFQQKSTNQRNIFQALCKGVTTSALGVGQGGTLLLDTVPLLKRILSPQLRSVAVQLLSPKEQQDLRHTIEVMVDLGLTFVQVKSQEGHYVFQTEPDLDALSAFPGYTGLSLPYFSRQLIAREVDLERIRRAAPKGGAPSAPAAKKKTSGAAAQLPNHLQTLKPKPISASNMHSAPKQQLTKDFFGRITHKSTSTNSAEESKTDAIVKSPIWYRYKEGFNNAVRKDVHIHELL</sequence>
<protein>
    <recommendedName>
        <fullName evidence="1">Chromosome transmission fidelity protein 18 homolog</fullName>
        <shortName evidence="1">CTF18</shortName>
    </recommendedName>
    <alternativeName>
        <fullName evidence="5 8">Cutlet protein</fullName>
    </alternativeName>
</protein>
<feature type="chain" id="PRO_0000456806" description="Chromosome transmission fidelity protein 18 homolog" evidence="6">
    <location>
        <begin position="1"/>
        <end position="993"/>
    </location>
</feature>
<feature type="region of interest" description="Disordered" evidence="3">
    <location>
        <begin position="26"/>
        <end position="72"/>
    </location>
</feature>
<feature type="region of interest" description="Disordered" evidence="3">
    <location>
        <begin position="892"/>
        <end position="913"/>
    </location>
</feature>
<feature type="compositionally biased region" description="Polar residues" evidence="3">
    <location>
        <begin position="60"/>
        <end position="72"/>
    </location>
</feature>
<feature type="compositionally biased region" description="Low complexity" evidence="3">
    <location>
        <begin position="894"/>
        <end position="913"/>
    </location>
</feature>
<feature type="binding site" evidence="2">
    <location>
        <begin position="427"/>
        <end position="434"/>
    </location>
    <ligand>
        <name>ATP</name>
        <dbReference type="ChEBI" id="CHEBI:30616"/>
    </ligand>
</feature>
<feature type="sequence conflict" description="In Ref. 1; AAL02426." evidence="6" ref="1">
    <original>YGLEKENA</original>
    <variation>FGLVKENQ</variation>
    <location>
        <begin position="136"/>
        <end position="143"/>
    </location>
</feature>
<feature type="sequence conflict" description="In Ref. 1; AAL02426." evidence="6" ref="1">
    <original>H</original>
    <variation>Y</variation>
    <location>
        <position position="193"/>
    </location>
</feature>
<feature type="sequence conflict" description="In Ref. 1; AAL02426." evidence="6" ref="1">
    <original>D</original>
    <variation>E</variation>
    <location>
        <position position="285"/>
    </location>
</feature>
<feature type="sequence conflict" description="In Ref. 1; AAL02426." evidence="6" ref="1">
    <original>A</original>
    <variation>V</variation>
    <location>
        <position position="301"/>
    </location>
</feature>
<accession>Q8IQ05</accession>
<accession>Q95WV5</accession>
<gene>
    <name evidence="5 8" type="primary">cutlet</name>
    <name evidence="8" type="ORF">CG33122</name>
</gene>
<reference evidence="7" key="1">
    <citation type="journal article" date="2001" name="Dev. Biol.">
        <title>Structure-specific abnormalities associated with mutations in a DNA replication accessory factor in Drosophila.</title>
        <authorList>
            <person name="Jaffe A.B."/>
            <person name="Jongens T.A."/>
        </authorList>
    </citation>
    <scope>NUCLEOTIDE SEQUENCE [MRNA]</scope>
    <scope>SUBCELLULAR LOCATION</scope>
    <scope>DISRUPTION PHENOTYPE</scope>
</reference>
<reference evidence="9" key="2">
    <citation type="journal article" date="2000" name="Science">
        <title>The genome sequence of Drosophila melanogaster.</title>
        <authorList>
            <person name="Adams M.D."/>
            <person name="Celniker S.E."/>
            <person name="Holt R.A."/>
            <person name="Evans C.A."/>
            <person name="Gocayne J.D."/>
            <person name="Amanatides P.G."/>
            <person name="Scherer S.E."/>
            <person name="Li P.W."/>
            <person name="Hoskins R.A."/>
            <person name="Galle R.F."/>
            <person name="George R.A."/>
            <person name="Lewis S.E."/>
            <person name="Richards S."/>
            <person name="Ashburner M."/>
            <person name="Henderson S.N."/>
            <person name="Sutton G.G."/>
            <person name="Wortman J.R."/>
            <person name="Yandell M.D."/>
            <person name="Zhang Q."/>
            <person name="Chen L.X."/>
            <person name="Brandon R.C."/>
            <person name="Rogers Y.-H.C."/>
            <person name="Blazej R.G."/>
            <person name="Champe M."/>
            <person name="Pfeiffer B.D."/>
            <person name="Wan K.H."/>
            <person name="Doyle C."/>
            <person name="Baxter E.G."/>
            <person name="Helt G."/>
            <person name="Nelson C.R."/>
            <person name="Miklos G.L.G."/>
            <person name="Abril J.F."/>
            <person name="Agbayani A."/>
            <person name="An H.-J."/>
            <person name="Andrews-Pfannkoch C."/>
            <person name="Baldwin D."/>
            <person name="Ballew R.M."/>
            <person name="Basu A."/>
            <person name="Baxendale J."/>
            <person name="Bayraktaroglu L."/>
            <person name="Beasley E.M."/>
            <person name="Beeson K.Y."/>
            <person name="Benos P.V."/>
            <person name="Berman B.P."/>
            <person name="Bhandari D."/>
            <person name="Bolshakov S."/>
            <person name="Borkova D."/>
            <person name="Botchan M.R."/>
            <person name="Bouck J."/>
            <person name="Brokstein P."/>
            <person name="Brottier P."/>
            <person name="Burtis K.C."/>
            <person name="Busam D.A."/>
            <person name="Butler H."/>
            <person name="Cadieu E."/>
            <person name="Center A."/>
            <person name="Chandra I."/>
            <person name="Cherry J.M."/>
            <person name="Cawley S."/>
            <person name="Dahlke C."/>
            <person name="Davenport L.B."/>
            <person name="Davies P."/>
            <person name="de Pablos B."/>
            <person name="Delcher A."/>
            <person name="Deng Z."/>
            <person name="Mays A.D."/>
            <person name="Dew I."/>
            <person name="Dietz S.M."/>
            <person name="Dodson K."/>
            <person name="Doup L.E."/>
            <person name="Downes M."/>
            <person name="Dugan-Rocha S."/>
            <person name="Dunkov B.C."/>
            <person name="Dunn P."/>
            <person name="Durbin K.J."/>
            <person name="Evangelista C.C."/>
            <person name="Ferraz C."/>
            <person name="Ferriera S."/>
            <person name="Fleischmann W."/>
            <person name="Fosler C."/>
            <person name="Gabrielian A.E."/>
            <person name="Garg N.S."/>
            <person name="Gelbart W.M."/>
            <person name="Glasser K."/>
            <person name="Glodek A."/>
            <person name="Gong F."/>
            <person name="Gorrell J.H."/>
            <person name="Gu Z."/>
            <person name="Guan P."/>
            <person name="Harris M."/>
            <person name="Harris N.L."/>
            <person name="Harvey D.A."/>
            <person name="Heiman T.J."/>
            <person name="Hernandez J.R."/>
            <person name="Houck J."/>
            <person name="Hostin D."/>
            <person name="Houston K.A."/>
            <person name="Howland T.J."/>
            <person name="Wei M.-H."/>
            <person name="Ibegwam C."/>
            <person name="Jalali M."/>
            <person name="Kalush F."/>
            <person name="Karpen G.H."/>
            <person name="Ke Z."/>
            <person name="Kennison J.A."/>
            <person name="Ketchum K.A."/>
            <person name="Kimmel B.E."/>
            <person name="Kodira C.D."/>
            <person name="Kraft C.L."/>
            <person name="Kravitz S."/>
            <person name="Kulp D."/>
            <person name="Lai Z."/>
            <person name="Lasko P."/>
            <person name="Lei Y."/>
            <person name="Levitsky A.A."/>
            <person name="Li J.H."/>
            <person name="Li Z."/>
            <person name="Liang Y."/>
            <person name="Lin X."/>
            <person name="Liu X."/>
            <person name="Mattei B."/>
            <person name="McIntosh T.C."/>
            <person name="McLeod M.P."/>
            <person name="McPherson D."/>
            <person name="Merkulov G."/>
            <person name="Milshina N.V."/>
            <person name="Mobarry C."/>
            <person name="Morris J."/>
            <person name="Moshrefi A."/>
            <person name="Mount S.M."/>
            <person name="Moy M."/>
            <person name="Murphy B."/>
            <person name="Murphy L."/>
            <person name="Muzny D.M."/>
            <person name="Nelson D.L."/>
            <person name="Nelson D.R."/>
            <person name="Nelson K.A."/>
            <person name="Nixon K."/>
            <person name="Nusskern D.R."/>
            <person name="Pacleb J.M."/>
            <person name="Palazzolo M."/>
            <person name="Pittman G.S."/>
            <person name="Pan S."/>
            <person name="Pollard J."/>
            <person name="Puri V."/>
            <person name="Reese M.G."/>
            <person name="Reinert K."/>
            <person name="Remington K."/>
            <person name="Saunders R.D.C."/>
            <person name="Scheeler F."/>
            <person name="Shen H."/>
            <person name="Shue B.C."/>
            <person name="Siden-Kiamos I."/>
            <person name="Simpson M."/>
            <person name="Skupski M.P."/>
            <person name="Smith T.J."/>
            <person name="Spier E."/>
            <person name="Spradling A.C."/>
            <person name="Stapleton M."/>
            <person name="Strong R."/>
            <person name="Sun E."/>
            <person name="Svirskas R."/>
            <person name="Tector C."/>
            <person name="Turner R."/>
            <person name="Venter E."/>
            <person name="Wang A.H."/>
            <person name="Wang X."/>
            <person name="Wang Z.-Y."/>
            <person name="Wassarman D.A."/>
            <person name="Weinstock G.M."/>
            <person name="Weissenbach J."/>
            <person name="Williams S.M."/>
            <person name="Woodage T."/>
            <person name="Worley K.C."/>
            <person name="Wu D."/>
            <person name="Yang S."/>
            <person name="Yao Q.A."/>
            <person name="Ye J."/>
            <person name="Yeh R.-F."/>
            <person name="Zaveri J.S."/>
            <person name="Zhan M."/>
            <person name="Zhang G."/>
            <person name="Zhao Q."/>
            <person name="Zheng L."/>
            <person name="Zheng X.H."/>
            <person name="Zhong F.N."/>
            <person name="Zhong W."/>
            <person name="Zhou X."/>
            <person name="Zhu S.C."/>
            <person name="Zhu X."/>
            <person name="Smith H.O."/>
            <person name="Gibbs R.A."/>
            <person name="Myers E.W."/>
            <person name="Rubin G.M."/>
            <person name="Venter J.C."/>
        </authorList>
    </citation>
    <scope>NUCLEOTIDE SEQUENCE [LARGE SCALE GENOMIC DNA]</scope>
    <source>
        <strain evidence="9">Berkeley</strain>
    </source>
</reference>
<reference evidence="9" key="3">
    <citation type="journal article" date="2002" name="Genome Biol.">
        <title>Annotation of the Drosophila melanogaster euchromatic genome: a systematic review.</title>
        <authorList>
            <person name="Misra S."/>
            <person name="Crosby M.A."/>
            <person name="Mungall C.J."/>
            <person name="Matthews B.B."/>
            <person name="Campbell K.S."/>
            <person name="Hradecky P."/>
            <person name="Huang Y."/>
            <person name="Kaminker J.S."/>
            <person name="Millburn G.H."/>
            <person name="Prochnik S.E."/>
            <person name="Smith C.D."/>
            <person name="Tupy J.L."/>
            <person name="Whitfield E.J."/>
            <person name="Bayraktaroglu L."/>
            <person name="Berman B.P."/>
            <person name="Bettencourt B.R."/>
            <person name="Celniker S.E."/>
            <person name="de Grey A.D.N.J."/>
            <person name="Drysdale R.A."/>
            <person name="Harris N.L."/>
            <person name="Richter J."/>
            <person name="Russo S."/>
            <person name="Schroeder A.J."/>
            <person name="Shu S.Q."/>
            <person name="Stapleton M."/>
            <person name="Yamada C."/>
            <person name="Ashburner M."/>
            <person name="Gelbart W.M."/>
            <person name="Rubin G.M."/>
            <person name="Lewis S.E."/>
        </authorList>
    </citation>
    <scope>GENOME REANNOTATION</scope>
    <source>
        <strain evidence="9">Berkeley</strain>
    </source>
</reference>